<dbReference type="EMBL" id="CH471062">
    <property type="protein sequence ID" value="EAW61851.1"/>
    <property type="molecule type" value="Genomic_DNA"/>
</dbReference>
<dbReference type="EMBL" id="BC130586">
    <property type="protein sequence ID" value="AAI30587.1"/>
    <property type="molecule type" value="mRNA"/>
</dbReference>
<dbReference type="EMBL" id="BC130588">
    <property type="protein sequence ID" value="AAI30589.1"/>
    <property type="molecule type" value="mRNA"/>
</dbReference>
<dbReference type="CCDS" id="CCDS34264.1"/>
<dbReference type="RefSeq" id="NP_001025040.1">
    <property type="nucleotide sequence ID" value="NM_001029869.3"/>
</dbReference>
<dbReference type="BioGRID" id="127518">
    <property type="interactions" value="21"/>
</dbReference>
<dbReference type="FunCoup" id="A1L4L8">
    <property type="interactions" value="1"/>
</dbReference>
<dbReference type="IntAct" id="A1L4L8">
    <property type="interactions" value="19"/>
</dbReference>
<dbReference type="MINT" id="A1L4L8"/>
<dbReference type="STRING" id="9606.ENSP00000309087"/>
<dbReference type="BioMuta" id="PLAC8L1"/>
<dbReference type="PaxDb" id="9606-ENSP00000309087"/>
<dbReference type="Antibodypedia" id="77009">
    <property type="antibodies" value="17 antibodies from 9 providers"/>
</dbReference>
<dbReference type="DNASU" id="153770"/>
<dbReference type="Ensembl" id="ENST00000311450.9">
    <property type="protein sequence ID" value="ENSP00000309087.4"/>
    <property type="gene ID" value="ENSG00000173261.9"/>
</dbReference>
<dbReference type="GeneID" id="153770"/>
<dbReference type="KEGG" id="hsa:153770"/>
<dbReference type="MANE-Select" id="ENST00000311450.9">
    <property type="protein sequence ID" value="ENSP00000309087.4"/>
    <property type="RefSeq nucleotide sequence ID" value="NM_001029869.3"/>
    <property type="RefSeq protein sequence ID" value="NP_001025040.1"/>
</dbReference>
<dbReference type="UCSC" id="uc003lnv.4">
    <property type="organism name" value="human"/>
</dbReference>
<dbReference type="AGR" id="HGNC:31746"/>
<dbReference type="CTD" id="153770"/>
<dbReference type="DisGeNET" id="153770"/>
<dbReference type="GeneCards" id="PLAC8L1"/>
<dbReference type="HGNC" id="HGNC:31746">
    <property type="gene designation" value="PLAC8L1"/>
</dbReference>
<dbReference type="HPA" id="ENSG00000173261">
    <property type="expression patterns" value="Tissue enriched (testis)"/>
</dbReference>
<dbReference type="neXtProt" id="NX_A1L4L8"/>
<dbReference type="OpenTargets" id="ENSG00000173261"/>
<dbReference type="PharmGKB" id="PA134890176"/>
<dbReference type="VEuPathDB" id="HostDB:ENSG00000173261"/>
<dbReference type="eggNOG" id="ENOG502S2DQ">
    <property type="taxonomic scope" value="Eukaryota"/>
</dbReference>
<dbReference type="GeneTree" id="ENSGT00940000160864"/>
<dbReference type="HOGENOM" id="CLU_083147_3_0_1"/>
<dbReference type="InParanoid" id="A1L4L8"/>
<dbReference type="OMA" id="FCWPLLP"/>
<dbReference type="OrthoDB" id="1045822at2759"/>
<dbReference type="PAN-GO" id="A1L4L8">
    <property type="GO annotations" value="0 GO annotations based on evolutionary models"/>
</dbReference>
<dbReference type="PhylomeDB" id="A1L4L8"/>
<dbReference type="TreeFam" id="TF330308"/>
<dbReference type="PathwayCommons" id="A1L4L8"/>
<dbReference type="SignaLink" id="A1L4L8"/>
<dbReference type="BioGRID-ORCS" id="153770">
    <property type="hits" value="11 hits in 1149 CRISPR screens"/>
</dbReference>
<dbReference type="ChiTaRS" id="PLAC8L1">
    <property type="organism name" value="human"/>
</dbReference>
<dbReference type="GenomeRNAi" id="153770"/>
<dbReference type="Pharos" id="A1L4L8">
    <property type="development level" value="Tdark"/>
</dbReference>
<dbReference type="PRO" id="PR:A1L4L8"/>
<dbReference type="Proteomes" id="UP000005640">
    <property type="component" value="Chromosome 5"/>
</dbReference>
<dbReference type="RNAct" id="A1L4L8">
    <property type="molecule type" value="protein"/>
</dbReference>
<dbReference type="Bgee" id="ENSG00000173261">
    <property type="expression patterns" value="Expressed in male germ line stem cell (sensu Vertebrata) in testis and 121 other cell types or tissues"/>
</dbReference>
<dbReference type="ExpressionAtlas" id="A1L4L8">
    <property type="expression patterns" value="baseline and differential"/>
</dbReference>
<dbReference type="InterPro" id="IPR006461">
    <property type="entry name" value="PLAC_motif_containing"/>
</dbReference>
<dbReference type="NCBIfam" id="TIGR01571">
    <property type="entry name" value="A_thal_Cys_rich"/>
    <property type="match status" value="1"/>
</dbReference>
<dbReference type="PANTHER" id="PTHR15907">
    <property type="entry name" value="DUF614 FAMILY PROTEIN-RELATED"/>
    <property type="match status" value="1"/>
</dbReference>
<dbReference type="Pfam" id="PF04749">
    <property type="entry name" value="PLAC8"/>
    <property type="match status" value="1"/>
</dbReference>
<protein>
    <recommendedName>
        <fullName>PLAC8-like protein 1</fullName>
    </recommendedName>
</protein>
<gene>
    <name type="primary">PLAC8L1</name>
</gene>
<feature type="chain" id="PRO_0000311396" description="PLAC8-like protein 1">
    <location>
        <begin position="1"/>
        <end position="177"/>
    </location>
</feature>
<feature type="sequence variant" id="VAR_037245" description="In dbSNP:rs12187913.">
    <original>C</original>
    <variation>S</variation>
    <location>
        <position position="11"/>
    </location>
</feature>
<keyword id="KW-1185">Reference proteome</keyword>
<proteinExistence type="evidence at transcript level"/>
<evidence type="ECO:0000305" key="1"/>
<comment type="similarity">
    <text evidence="1">Belongs to the cornifelin family.</text>
</comment>
<accession>A1L4L8</accession>
<name>PL8L1_HUMAN</name>
<sequence length="177" mass="19885">MNWFGSNFFRCPEDLSLLNIYSPLLSHMSSEDEHFISNLRGHVPASAVVKQPVRGASGRTTITAIVQTGGGWSTGLFSVCRDRRICFCGLFCPMCLECDIARHYGECLCWPLLPGSTFALRIGTRERHKIQGTLCEDWLAVHCCWAFSICQVARELKMRTSQVYEICAVPMTKDTLV</sequence>
<organism>
    <name type="scientific">Homo sapiens</name>
    <name type="common">Human</name>
    <dbReference type="NCBI Taxonomy" id="9606"/>
    <lineage>
        <taxon>Eukaryota</taxon>
        <taxon>Metazoa</taxon>
        <taxon>Chordata</taxon>
        <taxon>Craniata</taxon>
        <taxon>Vertebrata</taxon>
        <taxon>Euteleostomi</taxon>
        <taxon>Mammalia</taxon>
        <taxon>Eutheria</taxon>
        <taxon>Euarchontoglires</taxon>
        <taxon>Primates</taxon>
        <taxon>Haplorrhini</taxon>
        <taxon>Catarrhini</taxon>
        <taxon>Hominidae</taxon>
        <taxon>Homo</taxon>
    </lineage>
</organism>
<reference key="1">
    <citation type="submission" date="2005-09" db="EMBL/GenBank/DDBJ databases">
        <authorList>
            <person name="Mural R.J."/>
            <person name="Istrail S."/>
            <person name="Sutton G.G."/>
            <person name="Florea L."/>
            <person name="Halpern A.L."/>
            <person name="Mobarry C.M."/>
            <person name="Lippert R."/>
            <person name="Walenz B."/>
            <person name="Shatkay H."/>
            <person name="Dew I."/>
            <person name="Miller J.R."/>
            <person name="Flanigan M.J."/>
            <person name="Edwards N.J."/>
            <person name="Bolanos R."/>
            <person name="Fasulo D."/>
            <person name="Halldorsson B.V."/>
            <person name="Hannenhalli S."/>
            <person name="Turner R."/>
            <person name="Yooseph S."/>
            <person name="Lu F."/>
            <person name="Nusskern D.R."/>
            <person name="Shue B.C."/>
            <person name="Zheng X.H."/>
            <person name="Zhong F."/>
            <person name="Delcher A.L."/>
            <person name="Huson D.H."/>
            <person name="Kravitz S.A."/>
            <person name="Mouchard L."/>
            <person name="Reinert K."/>
            <person name="Remington K.A."/>
            <person name="Clark A.G."/>
            <person name="Waterman M.S."/>
            <person name="Eichler E.E."/>
            <person name="Adams M.D."/>
            <person name="Hunkapiller M.W."/>
            <person name="Myers E.W."/>
            <person name="Venter J.C."/>
        </authorList>
    </citation>
    <scope>NUCLEOTIDE SEQUENCE [LARGE SCALE GENOMIC DNA]</scope>
</reference>
<reference key="2">
    <citation type="journal article" date="2004" name="Genome Res.">
        <title>The status, quality, and expansion of the NIH full-length cDNA project: the Mammalian Gene Collection (MGC).</title>
        <authorList>
            <consortium name="The MGC Project Team"/>
        </authorList>
    </citation>
    <scope>NUCLEOTIDE SEQUENCE [LARGE SCALE MRNA]</scope>
    <source>
        <tissue>Brain</tissue>
    </source>
</reference>